<feature type="chain" id="PRO_1000197689" description="Succinate--CoA ligase [ADP-forming] subunit beta">
    <location>
        <begin position="1"/>
        <end position="391"/>
    </location>
</feature>
<feature type="domain" description="ATP-grasp" evidence="1">
    <location>
        <begin position="9"/>
        <end position="247"/>
    </location>
</feature>
<feature type="binding site" evidence="1">
    <location>
        <position position="49"/>
    </location>
    <ligand>
        <name>ATP</name>
        <dbReference type="ChEBI" id="CHEBI:30616"/>
    </ligand>
</feature>
<feature type="binding site" evidence="1">
    <location>
        <begin position="56"/>
        <end position="58"/>
    </location>
    <ligand>
        <name>ATP</name>
        <dbReference type="ChEBI" id="CHEBI:30616"/>
    </ligand>
</feature>
<feature type="binding site" evidence="1">
    <location>
        <position position="102"/>
    </location>
    <ligand>
        <name>ATP</name>
        <dbReference type="ChEBI" id="CHEBI:30616"/>
    </ligand>
</feature>
<feature type="binding site" evidence="1">
    <location>
        <position position="105"/>
    </location>
    <ligand>
        <name>ATP</name>
        <dbReference type="ChEBI" id="CHEBI:30616"/>
    </ligand>
</feature>
<feature type="binding site" evidence="1">
    <location>
        <position position="110"/>
    </location>
    <ligand>
        <name>ATP</name>
        <dbReference type="ChEBI" id="CHEBI:30616"/>
    </ligand>
</feature>
<feature type="binding site" evidence="1">
    <location>
        <position position="202"/>
    </location>
    <ligand>
        <name>Mg(2+)</name>
        <dbReference type="ChEBI" id="CHEBI:18420"/>
    </ligand>
</feature>
<feature type="binding site" evidence="1">
    <location>
        <position position="216"/>
    </location>
    <ligand>
        <name>Mg(2+)</name>
        <dbReference type="ChEBI" id="CHEBI:18420"/>
    </ligand>
</feature>
<feature type="binding site" evidence="1">
    <location>
        <position position="267"/>
    </location>
    <ligand>
        <name>substrate</name>
        <note>ligand shared with subunit alpha</note>
    </ligand>
</feature>
<feature type="binding site" evidence="1">
    <location>
        <begin position="324"/>
        <end position="326"/>
    </location>
    <ligand>
        <name>substrate</name>
        <note>ligand shared with subunit alpha</note>
    </ligand>
</feature>
<organism>
    <name type="scientific">Acidobacterium capsulatum (strain ATCC 51196 / DSM 11244 / BCRC 80197 / JCM 7670 / NBRC 15755 / NCIMB 13165 / 161)</name>
    <dbReference type="NCBI Taxonomy" id="240015"/>
    <lineage>
        <taxon>Bacteria</taxon>
        <taxon>Pseudomonadati</taxon>
        <taxon>Acidobacteriota</taxon>
        <taxon>Terriglobia</taxon>
        <taxon>Terriglobales</taxon>
        <taxon>Acidobacteriaceae</taxon>
        <taxon>Acidobacterium</taxon>
    </lineage>
</organism>
<sequence>MKIHEYQAKDILAKYGVAVPRGEVANTLEEAMDVAKRLFAEGAKGVVVKAQIHAGGRGKGGGVKVAKTLEEAEQYAKQILGMQLVTHQTGPQGQKVQRLLIEETAAIDRELYLGIVLDRAAAKLVFMASQAGGMEIEEVAAKDPSAIFKAYIDPAVGFQAYQARQLAFALGLKPTQINDAVKFMMGLYKAYMDTDASLLEINPFITTKDDKLFALDCKINFDDNAMFRHKDLKELRDIAEEDPLEVEASKYALNYIKLDGNIACMVNGAGLAMATMDIIQYAGGMPANFLDVGGGANQQQIEHAFEILLSDKNVQAVFINIFGGILRVDTLAHGVVGAAQKLNVKVPIVLRLEGTNVEEGRKILKDSGLNFIVGDTMQDAAQKVVAAAKGQ</sequence>
<keyword id="KW-0067">ATP-binding</keyword>
<keyword id="KW-0436">Ligase</keyword>
<keyword id="KW-0460">Magnesium</keyword>
<keyword id="KW-0479">Metal-binding</keyword>
<keyword id="KW-0547">Nucleotide-binding</keyword>
<keyword id="KW-1185">Reference proteome</keyword>
<keyword id="KW-0816">Tricarboxylic acid cycle</keyword>
<name>SUCC_ACIC5</name>
<proteinExistence type="inferred from homology"/>
<evidence type="ECO:0000255" key="1">
    <source>
        <dbReference type="HAMAP-Rule" id="MF_00558"/>
    </source>
</evidence>
<reference key="1">
    <citation type="journal article" date="2009" name="Appl. Environ. Microbiol.">
        <title>Three genomes from the phylum Acidobacteria provide insight into the lifestyles of these microorganisms in soils.</title>
        <authorList>
            <person name="Ward N.L."/>
            <person name="Challacombe J.F."/>
            <person name="Janssen P.H."/>
            <person name="Henrissat B."/>
            <person name="Coutinho P.M."/>
            <person name="Wu M."/>
            <person name="Xie G."/>
            <person name="Haft D.H."/>
            <person name="Sait M."/>
            <person name="Badger J."/>
            <person name="Barabote R.D."/>
            <person name="Bradley B."/>
            <person name="Brettin T.S."/>
            <person name="Brinkac L.M."/>
            <person name="Bruce D."/>
            <person name="Creasy T."/>
            <person name="Daugherty S.C."/>
            <person name="Davidsen T.M."/>
            <person name="DeBoy R.T."/>
            <person name="Detter J.C."/>
            <person name="Dodson R.J."/>
            <person name="Durkin A.S."/>
            <person name="Ganapathy A."/>
            <person name="Gwinn-Giglio M."/>
            <person name="Han C.S."/>
            <person name="Khouri H."/>
            <person name="Kiss H."/>
            <person name="Kothari S.P."/>
            <person name="Madupu R."/>
            <person name="Nelson K.E."/>
            <person name="Nelson W.C."/>
            <person name="Paulsen I."/>
            <person name="Penn K."/>
            <person name="Ren Q."/>
            <person name="Rosovitz M.J."/>
            <person name="Selengut J.D."/>
            <person name="Shrivastava S."/>
            <person name="Sullivan S.A."/>
            <person name="Tapia R."/>
            <person name="Thompson L.S."/>
            <person name="Watkins K.L."/>
            <person name="Yang Q."/>
            <person name="Yu C."/>
            <person name="Zafar N."/>
            <person name="Zhou L."/>
            <person name="Kuske C.R."/>
        </authorList>
    </citation>
    <scope>NUCLEOTIDE SEQUENCE [LARGE SCALE GENOMIC DNA]</scope>
    <source>
        <strain>ATCC 51196 / DSM 11244 / BCRC 80197 / JCM 7670 / NBRC 15755 / NCIMB 13165 / 161</strain>
    </source>
</reference>
<dbReference type="EC" id="6.2.1.5" evidence="1"/>
<dbReference type="EMBL" id="CP001472">
    <property type="protein sequence ID" value="ACO32585.1"/>
    <property type="molecule type" value="Genomic_DNA"/>
</dbReference>
<dbReference type="RefSeq" id="WP_015897678.1">
    <property type="nucleotide sequence ID" value="NC_012483.1"/>
</dbReference>
<dbReference type="SMR" id="C1F2F2"/>
<dbReference type="FunCoup" id="C1F2F2">
    <property type="interactions" value="538"/>
</dbReference>
<dbReference type="STRING" id="240015.ACP_2612"/>
<dbReference type="KEGG" id="aca:ACP_2612"/>
<dbReference type="eggNOG" id="COG0045">
    <property type="taxonomic scope" value="Bacteria"/>
</dbReference>
<dbReference type="HOGENOM" id="CLU_037430_0_2_0"/>
<dbReference type="InParanoid" id="C1F2F2"/>
<dbReference type="OrthoDB" id="9802602at2"/>
<dbReference type="UniPathway" id="UPA00223">
    <property type="reaction ID" value="UER00999"/>
</dbReference>
<dbReference type="Proteomes" id="UP000002207">
    <property type="component" value="Chromosome"/>
</dbReference>
<dbReference type="GO" id="GO:0005829">
    <property type="term" value="C:cytosol"/>
    <property type="evidence" value="ECO:0007669"/>
    <property type="project" value="TreeGrafter"/>
</dbReference>
<dbReference type="GO" id="GO:0042709">
    <property type="term" value="C:succinate-CoA ligase complex"/>
    <property type="evidence" value="ECO:0007669"/>
    <property type="project" value="TreeGrafter"/>
</dbReference>
<dbReference type="GO" id="GO:0005524">
    <property type="term" value="F:ATP binding"/>
    <property type="evidence" value="ECO:0007669"/>
    <property type="project" value="UniProtKB-UniRule"/>
</dbReference>
<dbReference type="GO" id="GO:0000287">
    <property type="term" value="F:magnesium ion binding"/>
    <property type="evidence" value="ECO:0007669"/>
    <property type="project" value="UniProtKB-UniRule"/>
</dbReference>
<dbReference type="GO" id="GO:0004775">
    <property type="term" value="F:succinate-CoA ligase (ADP-forming) activity"/>
    <property type="evidence" value="ECO:0007669"/>
    <property type="project" value="UniProtKB-UniRule"/>
</dbReference>
<dbReference type="GO" id="GO:0004776">
    <property type="term" value="F:succinate-CoA ligase (GDP-forming) activity"/>
    <property type="evidence" value="ECO:0007669"/>
    <property type="project" value="RHEA"/>
</dbReference>
<dbReference type="GO" id="GO:0006104">
    <property type="term" value="P:succinyl-CoA metabolic process"/>
    <property type="evidence" value="ECO:0007669"/>
    <property type="project" value="TreeGrafter"/>
</dbReference>
<dbReference type="GO" id="GO:0006099">
    <property type="term" value="P:tricarboxylic acid cycle"/>
    <property type="evidence" value="ECO:0007669"/>
    <property type="project" value="UniProtKB-UniRule"/>
</dbReference>
<dbReference type="FunFam" id="3.30.1490.20:FF:000002">
    <property type="entry name" value="Succinate--CoA ligase [ADP-forming] subunit beta"/>
    <property type="match status" value="1"/>
</dbReference>
<dbReference type="FunFam" id="3.30.470.20:FF:000002">
    <property type="entry name" value="Succinate--CoA ligase [ADP-forming] subunit beta"/>
    <property type="match status" value="1"/>
</dbReference>
<dbReference type="FunFam" id="3.40.50.261:FF:000001">
    <property type="entry name" value="Succinate--CoA ligase [ADP-forming] subunit beta"/>
    <property type="match status" value="1"/>
</dbReference>
<dbReference type="Gene3D" id="3.30.1490.20">
    <property type="entry name" value="ATP-grasp fold, A domain"/>
    <property type="match status" value="1"/>
</dbReference>
<dbReference type="Gene3D" id="3.30.470.20">
    <property type="entry name" value="ATP-grasp fold, B domain"/>
    <property type="match status" value="1"/>
</dbReference>
<dbReference type="Gene3D" id="3.40.50.261">
    <property type="entry name" value="Succinyl-CoA synthetase domains"/>
    <property type="match status" value="1"/>
</dbReference>
<dbReference type="HAMAP" id="MF_00558">
    <property type="entry name" value="Succ_CoA_beta"/>
    <property type="match status" value="1"/>
</dbReference>
<dbReference type="InterPro" id="IPR011761">
    <property type="entry name" value="ATP-grasp"/>
</dbReference>
<dbReference type="InterPro" id="IPR013650">
    <property type="entry name" value="ATP-grasp_succ-CoA_synth-type"/>
</dbReference>
<dbReference type="InterPro" id="IPR013815">
    <property type="entry name" value="ATP_grasp_subdomain_1"/>
</dbReference>
<dbReference type="InterPro" id="IPR017866">
    <property type="entry name" value="Succ-CoA_synthase_bsu_CS"/>
</dbReference>
<dbReference type="InterPro" id="IPR005811">
    <property type="entry name" value="SUCC_ACL_C"/>
</dbReference>
<dbReference type="InterPro" id="IPR005809">
    <property type="entry name" value="Succ_CoA_ligase-like_bsu"/>
</dbReference>
<dbReference type="InterPro" id="IPR016102">
    <property type="entry name" value="Succinyl-CoA_synth-like"/>
</dbReference>
<dbReference type="NCBIfam" id="NF001913">
    <property type="entry name" value="PRK00696.1"/>
    <property type="match status" value="1"/>
</dbReference>
<dbReference type="NCBIfam" id="TIGR01016">
    <property type="entry name" value="sucCoAbeta"/>
    <property type="match status" value="1"/>
</dbReference>
<dbReference type="PANTHER" id="PTHR11815:SF10">
    <property type="entry name" value="SUCCINATE--COA LIGASE [GDP-FORMING] SUBUNIT BETA, MITOCHONDRIAL"/>
    <property type="match status" value="1"/>
</dbReference>
<dbReference type="PANTHER" id="PTHR11815">
    <property type="entry name" value="SUCCINYL-COA SYNTHETASE BETA CHAIN"/>
    <property type="match status" value="1"/>
</dbReference>
<dbReference type="Pfam" id="PF08442">
    <property type="entry name" value="ATP-grasp_2"/>
    <property type="match status" value="1"/>
</dbReference>
<dbReference type="Pfam" id="PF00549">
    <property type="entry name" value="Ligase_CoA"/>
    <property type="match status" value="1"/>
</dbReference>
<dbReference type="PIRSF" id="PIRSF001554">
    <property type="entry name" value="SucCS_beta"/>
    <property type="match status" value="1"/>
</dbReference>
<dbReference type="SUPFAM" id="SSF56059">
    <property type="entry name" value="Glutathione synthetase ATP-binding domain-like"/>
    <property type="match status" value="1"/>
</dbReference>
<dbReference type="SUPFAM" id="SSF52210">
    <property type="entry name" value="Succinyl-CoA synthetase domains"/>
    <property type="match status" value="1"/>
</dbReference>
<dbReference type="PROSITE" id="PS50975">
    <property type="entry name" value="ATP_GRASP"/>
    <property type="match status" value="1"/>
</dbReference>
<dbReference type="PROSITE" id="PS01217">
    <property type="entry name" value="SUCCINYL_COA_LIG_3"/>
    <property type="match status" value="1"/>
</dbReference>
<gene>
    <name evidence="1" type="primary">sucC</name>
    <name type="ordered locus">ACP_2612</name>
</gene>
<protein>
    <recommendedName>
        <fullName evidence="1">Succinate--CoA ligase [ADP-forming] subunit beta</fullName>
        <ecNumber evidence="1">6.2.1.5</ecNumber>
    </recommendedName>
    <alternativeName>
        <fullName evidence="1">Succinyl-CoA synthetase subunit beta</fullName>
        <shortName evidence="1">SCS-beta</shortName>
    </alternativeName>
</protein>
<accession>C1F2F2</accession>
<comment type="function">
    <text evidence="1">Succinyl-CoA synthetase functions in the citric acid cycle (TCA), coupling the hydrolysis of succinyl-CoA to the synthesis of either ATP or GTP and thus represents the only step of substrate-level phosphorylation in the TCA. The beta subunit provides nucleotide specificity of the enzyme and binds the substrate succinate, while the binding sites for coenzyme A and phosphate are found in the alpha subunit.</text>
</comment>
<comment type="catalytic activity">
    <reaction evidence="1">
        <text>succinate + ATP + CoA = succinyl-CoA + ADP + phosphate</text>
        <dbReference type="Rhea" id="RHEA:17661"/>
        <dbReference type="ChEBI" id="CHEBI:30031"/>
        <dbReference type="ChEBI" id="CHEBI:30616"/>
        <dbReference type="ChEBI" id="CHEBI:43474"/>
        <dbReference type="ChEBI" id="CHEBI:57287"/>
        <dbReference type="ChEBI" id="CHEBI:57292"/>
        <dbReference type="ChEBI" id="CHEBI:456216"/>
        <dbReference type="EC" id="6.2.1.5"/>
    </reaction>
    <physiologicalReaction direction="right-to-left" evidence="1">
        <dbReference type="Rhea" id="RHEA:17663"/>
    </physiologicalReaction>
</comment>
<comment type="catalytic activity">
    <reaction evidence="1">
        <text>GTP + succinate + CoA = succinyl-CoA + GDP + phosphate</text>
        <dbReference type="Rhea" id="RHEA:22120"/>
        <dbReference type="ChEBI" id="CHEBI:30031"/>
        <dbReference type="ChEBI" id="CHEBI:37565"/>
        <dbReference type="ChEBI" id="CHEBI:43474"/>
        <dbReference type="ChEBI" id="CHEBI:57287"/>
        <dbReference type="ChEBI" id="CHEBI:57292"/>
        <dbReference type="ChEBI" id="CHEBI:58189"/>
    </reaction>
    <physiologicalReaction direction="right-to-left" evidence="1">
        <dbReference type="Rhea" id="RHEA:22122"/>
    </physiologicalReaction>
</comment>
<comment type="cofactor">
    <cofactor evidence="1">
        <name>Mg(2+)</name>
        <dbReference type="ChEBI" id="CHEBI:18420"/>
    </cofactor>
    <text evidence="1">Binds 1 Mg(2+) ion per subunit.</text>
</comment>
<comment type="pathway">
    <text evidence="1">Carbohydrate metabolism; tricarboxylic acid cycle; succinate from succinyl-CoA (ligase route): step 1/1.</text>
</comment>
<comment type="subunit">
    <text evidence="1">Heterotetramer of two alpha and two beta subunits.</text>
</comment>
<comment type="similarity">
    <text evidence="1">Belongs to the succinate/malate CoA ligase beta subunit family.</text>
</comment>